<reference key="1">
    <citation type="journal article" date="2003" name="Mol. Phylogenet. Evol.">
        <title>Inference of higher-order relationships in the cycads from a large chloroplast data set.</title>
        <authorList>
            <person name="Rai H.S."/>
            <person name="O'Brien H.E."/>
            <person name="Reeves P.A."/>
            <person name="Olmstead R.G."/>
            <person name="Graham S.W."/>
        </authorList>
    </citation>
    <scope>NUCLEOTIDE SEQUENCE [GENOMIC DNA]</scope>
</reference>
<geneLocation type="chloroplast"/>
<accession>Q71LB6</accession>
<sequence>MEALVYTFLLVSTLGIIFFAIFFREPPKVPTKGGK</sequence>
<organism>
    <name type="scientific">Cedrus deodara</name>
    <name type="common">Deodar cedar</name>
    <name type="synonym">Pinus deodara</name>
    <dbReference type="NCBI Taxonomy" id="3322"/>
    <lineage>
        <taxon>Eukaryota</taxon>
        <taxon>Viridiplantae</taxon>
        <taxon>Streptophyta</taxon>
        <taxon>Embryophyta</taxon>
        <taxon>Tracheophyta</taxon>
        <taxon>Spermatophyta</taxon>
        <taxon>Pinopsida</taxon>
        <taxon>Pinidae</taxon>
        <taxon>Conifers I</taxon>
        <taxon>Pinales</taxon>
        <taxon>Pinaceae</taxon>
        <taxon>Cedrus</taxon>
    </lineage>
</organism>
<gene>
    <name evidence="1" type="primary">psbT</name>
</gene>
<dbReference type="EMBL" id="AF469704">
    <property type="protein sequence ID" value="AAQ18523.1"/>
    <property type="molecule type" value="Genomic_DNA"/>
</dbReference>
<dbReference type="RefSeq" id="YP_003934140.1">
    <property type="nucleotide sequence ID" value="NC_014575.1"/>
</dbReference>
<dbReference type="SMR" id="Q71LB6"/>
<dbReference type="GeneID" id="9845499"/>
<dbReference type="GO" id="GO:0009535">
    <property type="term" value="C:chloroplast thylakoid membrane"/>
    <property type="evidence" value="ECO:0007669"/>
    <property type="project" value="UniProtKB-SubCell"/>
</dbReference>
<dbReference type="GO" id="GO:0009539">
    <property type="term" value="C:photosystem II reaction center"/>
    <property type="evidence" value="ECO:0007669"/>
    <property type="project" value="InterPro"/>
</dbReference>
<dbReference type="GO" id="GO:0015979">
    <property type="term" value="P:photosynthesis"/>
    <property type="evidence" value="ECO:0007669"/>
    <property type="project" value="UniProtKB-UniRule"/>
</dbReference>
<dbReference type="HAMAP" id="MF_00808">
    <property type="entry name" value="PSII_PsbT"/>
    <property type="match status" value="1"/>
</dbReference>
<dbReference type="InterPro" id="IPR001743">
    <property type="entry name" value="PSII_PsbT"/>
</dbReference>
<dbReference type="InterPro" id="IPR037268">
    <property type="entry name" value="PSII_PsbT_sf"/>
</dbReference>
<dbReference type="PANTHER" id="PTHR36411">
    <property type="match status" value="1"/>
</dbReference>
<dbReference type="PANTHER" id="PTHR36411:SF2">
    <property type="entry name" value="PHOTOSYSTEM II REACTION CENTER PROTEIN T"/>
    <property type="match status" value="1"/>
</dbReference>
<dbReference type="Pfam" id="PF01405">
    <property type="entry name" value="PsbT"/>
    <property type="match status" value="1"/>
</dbReference>
<dbReference type="SUPFAM" id="SSF161029">
    <property type="entry name" value="Photosystem II reaction center protein T, PsbT"/>
    <property type="match status" value="1"/>
</dbReference>
<name>PSBT_CEDDE</name>
<feature type="chain" id="PRO_0000217913" description="Photosystem II reaction center protein T">
    <location>
        <begin position="1"/>
        <end position="35"/>
    </location>
</feature>
<feature type="transmembrane region" description="Helical" evidence="1">
    <location>
        <begin position="3"/>
        <end position="23"/>
    </location>
</feature>
<proteinExistence type="inferred from homology"/>
<comment type="function">
    <text evidence="1">Found at the monomer-monomer interface of the photosystem II (PS II) dimer, plays a role in assembly and dimerization of PSII. PSII is a light-driven water plastoquinone oxidoreductase, using light energy to abstract electrons from H(2)O, generating a proton gradient subsequently used for ATP formation.</text>
</comment>
<comment type="subunit">
    <text evidence="1">PSII is composed of 1 copy each of membrane proteins PsbA, PsbB, PsbC, PsbD, PsbE, PsbF, PsbH, PsbI, PsbJ, PsbK, PsbL, PsbM, PsbT, PsbY, PsbZ, Psb30/Ycf12, at least 3 peripheral proteins of the oxygen-evolving complex and a large number of cofactors. It forms dimeric complexes.</text>
</comment>
<comment type="subcellular location">
    <subcellularLocation>
        <location evidence="1">Plastid</location>
        <location evidence="1">Chloroplast thylakoid membrane</location>
        <topology evidence="1">Single-pass membrane protein</topology>
    </subcellularLocation>
</comment>
<comment type="similarity">
    <text evidence="1">Belongs to the PsbT family.</text>
</comment>
<evidence type="ECO:0000255" key="1">
    <source>
        <dbReference type="HAMAP-Rule" id="MF_00808"/>
    </source>
</evidence>
<protein>
    <recommendedName>
        <fullName evidence="1">Photosystem II reaction center protein T</fullName>
        <shortName evidence="1">PSII-T</shortName>
    </recommendedName>
</protein>
<keyword id="KW-0150">Chloroplast</keyword>
<keyword id="KW-0472">Membrane</keyword>
<keyword id="KW-0602">Photosynthesis</keyword>
<keyword id="KW-0604">Photosystem II</keyword>
<keyword id="KW-0934">Plastid</keyword>
<keyword id="KW-0793">Thylakoid</keyword>
<keyword id="KW-0812">Transmembrane</keyword>
<keyword id="KW-1133">Transmembrane helix</keyword>